<comment type="function">
    <text evidence="1">May be important in protein trafficking and/or protein folding and stabilization.</text>
</comment>
<comment type="subunit">
    <text evidence="1">Interacts with NUB1.</text>
</comment>
<comment type="subcellular location">
    <subcellularLocation>
        <location evidence="1">Cytoplasm</location>
    </subcellularLocation>
    <subcellularLocation>
        <location evidence="1">Nucleus</location>
    </subcellularLocation>
</comment>
<comment type="tissue specificity">
    <text>Highly expressed in retina.</text>
</comment>
<reference key="1">
    <citation type="journal article" date="2000" name="Nat. Genet.">
        <title>Mutations in a novel photoreceptor-pineal gene on 17p cause Leber congenital amaurosis.</title>
        <authorList>
            <person name="Sohocki M.M."/>
            <person name="Bowne S.J."/>
            <person name="Sullivan L.S."/>
            <person name="Blackshaw S."/>
            <person name="Cepko C.L."/>
            <person name="Payne A.M."/>
            <person name="Bhattacharya S.S."/>
            <person name="Khaliq S."/>
            <person name="Mehdi Q."/>
            <person name="Birch D.G."/>
            <person name="Harrison W.R."/>
            <person name="Elder F.F.B."/>
            <person name="Heckenlively J.R."/>
            <person name="Daiger S.P."/>
        </authorList>
    </citation>
    <scope>NUCLEOTIDE SEQUENCE [MRNA]</scope>
</reference>
<name>AIPL1_RAT</name>
<sequence>MDVSLLLNVEGVKKTILHGGTGELPNFITGSRVTFHFRTMKCDEERTVIDDSKQVGQPMNIIIGNMFKLEVWETLLTSMRLGEVAEFWCDTIHTGVYPMLSRSLRQVAEGKDPTSWHVHTCGLANMFAYHTLGYEDLDELQKEPQPLIFLIELLQVEAPNEYQRETWNLNNEERMQAVPLLHGEGNRLYKLGRYDQAATKYQEAIVCLRNLQTKEKPWEVEWLKLEKMINTLILNYCQCLLKKEEYYEVLEHTSDILRHHPGIVKAYYMRARAHAEVWNAEEAKADLEKVLELEPSMRKAVLRELRLLESRLADKQEEERQRCRSMLG</sequence>
<protein>
    <recommendedName>
        <fullName>Aryl-hydrocarbon-interacting protein-like 1</fullName>
    </recommendedName>
</protein>
<dbReference type="EMBL" id="AF180340">
    <property type="protein sequence ID" value="AAF26707.1"/>
    <property type="molecule type" value="mRNA"/>
</dbReference>
<dbReference type="RefSeq" id="NP_067601.1">
    <property type="nucleotide sequence ID" value="NM_021590.2"/>
</dbReference>
<dbReference type="RefSeq" id="XP_017452988.1">
    <property type="nucleotide sequence ID" value="XM_017597499.1"/>
</dbReference>
<dbReference type="SMR" id="Q9JLG9"/>
<dbReference type="FunCoup" id="Q9JLG9">
    <property type="interactions" value="57"/>
</dbReference>
<dbReference type="STRING" id="10116.ENSRNOP00000010533"/>
<dbReference type="PhosphoSitePlus" id="Q9JLG9"/>
<dbReference type="PaxDb" id="10116-ENSRNOP00000010533"/>
<dbReference type="Ensembl" id="ENSRNOT00000010533.3">
    <property type="protein sequence ID" value="ENSRNOP00000010533.1"/>
    <property type="gene ID" value="ENSRNOG00000007889.5"/>
</dbReference>
<dbReference type="GeneID" id="59110"/>
<dbReference type="KEGG" id="rno:59110"/>
<dbReference type="UCSC" id="RGD:70906">
    <property type="organism name" value="rat"/>
</dbReference>
<dbReference type="AGR" id="RGD:70906"/>
<dbReference type="CTD" id="23746"/>
<dbReference type="RGD" id="70906">
    <property type="gene designation" value="Aipl1"/>
</dbReference>
<dbReference type="eggNOG" id="KOG0545">
    <property type="taxonomic scope" value="Eukaryota"/>
</dbReference>
<dbReference type="GeneTree" id="ENSGT00390000001289"/>
<dbReference type="HOGENOM" id="CLU_052244_0_0_1"/>
<dbReference type="InParanoid" id="Q9JLG9"/>
<dbReference type="OMA" id="EYDRETW"/>
<dbReference type="OrthoDB" id="5829758at2759"/>
<dbReference type="PhylomeDB" id="Q9JLG9"/>
<dbReference type="TreeFam" id="TF314507"/>
<dbReference type="PRO" id="PR:Q9JLG9"/>
<dbReference type="Proteomes" id="UP000002494">
    <property type="component" value="Chromosome 10"/>
</dbReference>
<dbReference type="Bgee" id="ENSRNOG00000007889">
    <property type="expression patterns" value="Expressed in testis and 1 other cell type or tissue"/>
</dbReference>
<dbReference type="GO" id="GO:0005737">
    <property type="term" value="C:cytoplasm"/>
    <property type="evidence" value="ECO:0000266"/>
    <property type="project" value="RGD"/>
</dbReference>
<dbReference type="GO" id="GO:0005829">
    <property type="term" value="C:cytosol"/>
    <property type="evidence" value="ECO:0007669"/>
    <property type="project" value="Ensembl"/>
</dbReference>
<dbReference type="GO" id="GO:0016607">
    <property type="term" value="C:nuclear speck"/>
    <property type="evidence" value="ECO:0007669"/>
    <property type="project" value="Ensembl"/>
</dbReference>
<dbReference type="GO" id="GO:0005634">
    <property type="term" value="C:nucleus"/>
    <property type="evidence" value="ECO:0000266"/>
    <property type="project" value="RGD"/>
</dbReference>
<dbReference type="GO" id="GO:0001917">
    <property type="term" value="C:photoreceptor inner segment"/>
    <property type="evidence" value="ECO:0000266"/>
    <property type="project" value="RGD"/>
</dbReference>
<dbReference type="GO" id="GO:0001918">
    <property type="term" value="F:farnesylated protein binding"/>
    <property type="evidence" value="ECO:0000266"/>
    <property type="project" value="RGD"/>
</dbReference>
<dbReference type="GO" id="GO:0003755">
    <property type="term" value="F:peptidyl-prolyl cis-trans isomerase activity"/>
    <property type="evidence" value="ECO:0007669"/>
    <property type="project" value="InterPro"/>
</dbReference>
<dbReference type="GO" id="GO:0006915">
    <property type="term" value="P:apoptotic process"/>
    <property type="evidence" value="ECO:0000266"/>
    <property type="project" value="RGD"/>
</dbReference>
<dbReference type="GO" id="GO:0043066">
    <property type="term" value="P:negative regulation of apoptotic process"/>
    <property type="evidence" value="ECO:0000266"/>
    <property type="project" value="RGD"/>
</dbReference>
<dbReference type="GO" id="GO:0007603">
    <property type="term" value="P:phototransduction, visible light"/>
    <property type="evidence" value="ECO:0000266"/>
    <property type="project" value="RGD"/>
</dbReference>
<dbReference type="GO" id="GO:0022400">
    <property type="term" value="P:regulation of opsin-mediated signaling pathway"/>
    <property type="evidence" value="ECO:0000266"/>
    <property type="project" value="RGD"/>
</dbReference>
<dbReference type="GO" id="GO:0001895">
    <property type="term" value="P:retina homeostasis"/>
    <property type="evidence" value="ECO:0000266"/>
    <property type="project" value="RGD"/>
</dbReference>
<dbReference type="FunFam" id="1.25.40.10:FF:000052">
    <property type="entry name" value="Aryl-hydrocarbon-interacting protein-like 1"/>
    <property type="match status" value="1"/>
</dbReference>
<dbReference type="FunFam" id="3.10.50.40:FF:000018">
    <property type="entry name" value="Aryl-hydrocarbon-interacting protein-like 1"/>
    <property type="match status" value="1"/>
</dbReference>
<dbReference type="Gene3D" id="3.10.50.40">
    <property type="match status" value="1"/>
</dbReference>
<dbReference type="Gene3D" id="1.25.40.10">
    <property type="entry name" value="Tetratricopeptide repeat domain"/>
    <property type="match status" value="1"/>
</dbReference>
<dbReference type="InterPro" id="IPR039663">
    <property type="entry name" value="AIP/AIPL1/TTC9"/>
</dbReference>
<dbReference type="InterPro" id="IPR056277">
    <property type="entry name" value="PPIase_AIP"/>
</dbReference>
<dbReference type="InterPro" id="IPR046357">
    <property type="entry name" value="PPIase_dom_sf"/>
</dbReference>
<dbReference type="InterPro" id="IPR011990">
    <property type="entry name" value="TPR-like_helical_dom_sf"/>
</dbReference>
<dbReference type="InterPro" id="IPR019734">
    <property type="entry name" value="TPR_rpt"/>
</dbReference>
<dbReference type="PANTHER" id="PTHR11242">
    <property type="entry name" value="ARYL HYDROCARBON RECEPTOR INTERACTING PROTEIN RELATED"/>
    <property type="match status" value="1"/>
</dbReference>
<dbReference type="PANTHER" id="PTHR11242:SF2">
    <property type="entry name" value="ARYL-HYDROCARBON-INTERACTING PROTEIN-LIKE 1"/>
    <property type="match status" value="1"/>
</dbReference>
<dbReference type="Pfam" id="PF23322">
    <property type="entry name" value="PPIase_AIP"/>
    <property type="match status" value="1"/>
</dbReference>
<dbReference type="SMART" id="SM00028">
    <property type="entry name" value="TPR"/>
    <property type="match status" value="2"/>
</dbReference>
<dbReference type="SUPFAM" id="SSF54534">
    <property type="entry name" value="FKBP-like"/>
    <property type="match status" value="1"/>
</dbReference>
<dbReference type="SUPFAM" id="SSF48452">
    <property type="entry name" value="TPR-like"/>
    <property type="match status" value="1"/>
</dbReference>
<dbReference type="PROSITE" id="PS50005">
    <property type="entry name" value="TPR"/>
    <property type="match status" value="2"/>
</dbReference>
<dbReference type="PROSITE" id="PS50293">
    <property type="entry name" value="TPR_REGION"/>
    <property type="match status" value="2"/>
</dbReference>
<keyword id="KW-0963">Cytoplasm</keyword>
<keyword id="KW-0539">Nucleus</keyword>
<keyword id="KW-1185">Reference proteome</keyword>
<keyword id="KW-0677">Repeat</keyword>
<keyword id="KW-0802">TPR repeat</keyword>
<accession>Q9JLG9</accession>
<proteinExistence type="evidence at transcript level"/>
<organism>
    <name type="scientific">Rattus norvegicus</name>
    <name type="common">Rat</name>
    <dbReference type="NCBI Taxonomy" id="10116"/>
    <lineage>
        <taxon>Eukaryota</taxon>
        <taxon>Metazoa</taxon>
        <taxon>Chordata</taxon>
        <taxon>Craniata</taxon>
        <taxon>Vertebrata</taxon>
        <taxon>Euteleostomi</taxon>
        <taxon>Mammalia</taxon>
        <taxon>Eutheria</taxon>
        <taxon>Euarchontoglires</taxon>
        <taxon>Glires</taxon>
        <taxon>Rodentia</taxon>
        <taxon>Myomorpha</taxon>
        <taxon>Muroidea</taxon>
        <taxon>Muridae</taxon>
        <taxon>Murinae</taxon>
        <taxon>Rattus</taxon>
    </lineage>
</organism>
<feature type="chain" id="PRO_0000075347" description="Aryl-hydrocarbon-interacting protein-like 1">
    <location>
        <begin position="1"/>
        <end position="328"/>
    </location>
</feature>
<feature type="domain" description="PPIase FKBP-type">
    <location>
        <begin position="53"/>
        <end position="145"/>
    </location>
</feature>
<feature type="repeat" description="TPR 1">
    <location>
        <begin position="178"/>
        <end position="211"/>
    </location>
</feature>
<feature type="repeat" description="TPR 2">
    <location>
        <begin position="230"/>
        <end position="263"/>
    </location>
</feature>
<feature type="repeat" description="TPR 3">
    <location>
        <begin position="264"/>
        <end position="297"/>
    </location>
</feature>
<gene>
    <name type="primary">Aipl1</name>
</gene>
<evidence type="ECO:0000250" key="1"/>